<dbReference type="EMBL" id="CP000394">
    <property type="protein sequence ID" value="ABI63021.1"/>
    <property type="molecule type" value="Genomic_DNA"/>
</dbReference>
<dbReference type="STRING" id="391165.GbCGDNIH1_2123"/>
<dbReference type="KEGG" id="gbe:GbCGDNIH1_2123"/>
<dbReference type="eggNOG" id="COG5487">
    <property type="taxonomic scope" value="Bacteria"/>
</dbReference>
<dbReference type="HOGENOM" id="CLU_187346_1_1_5"/>
<dbReference type="Proteomes" id="UP000001963">
    <property type="component" value="Chromosome"/>
</dbReference>
<dbReference type="GO" id="GO:0005886">
    <property type="term" value="C:plasma membrane"/>
    <property type="evidence" value="ECO:0007669"/>
    <property type="project" value="UniProtKB-SubCell"/>
</dbReference>
<dbReference type="HAMAP" id="MF_01361">
    <property type="entry name" value="UPF0391"/>
    <property type="match status" value="1"/>
</dbReference>
<dbReference type="InterPro" id="IPR009760">
    <property type="entry name" value="DUF1328"/>
</dbReference>
<dbReference type="NCBIfam" id="NF010234">
    <property type="entry name" value="PRK13682.2-5"/>
    <property type="match status" value="1"/>
</dbReference>
<dbReference type="Pfam" id="PF07043">
    <property type="entry name" value="DUF1328"/>
    <property type="match status" value="1"/>
</dbReference>
<dbReference type="PIRSF" id="PIRSF036466">
    <property type="entry name" value="UCP036466"/>
    <property type="match status" value="1"/>
</dbReference>
<feature type="chain" id="PRO_0000270218" description="UPF0391 membrane protein GbCGDNIH1_2123">
    <location>
        <begin position="1"/>
        <end position="59"/>
    </location>
</feature>
<feature type="transmembrane region" description="Helical" evidence="1">
    <location>
        <begin position="6"/>
        <end position="26"/>
    </location>
</feature>
<feature type="transmembrane region" description="Helical" evidence="1">
    <location>
        <begin position="35"/>
        <end position="55"/>
    </location>
</feature>
<evidence type="ECO:0000255" key="1">
    <source>
        <dbReference type="HAMAP-Rule" id="MF_01361"/>
    </source>
</evidence>
<comment type="subcellular location">
    <subcellularLocation>
        <location evidence="1">Cell membrane</location>
        <topology evidence="1">Multi-pass membrane protein</topology>
    </subcellularLocation>
</comment>
<comment type="similarity">
    <text evidence="1">Belongs to the UPF0391 family.</text>
</comment>
<protein>
    <recommendedName>
        <fullName evidence="1">UPF0391 membrane protein GbCGDNIH1_2123</fullName>
    </recommendedName>
</protein>
<organism>
    <name type="scientific">Granulibacter bethesdensis (strain ATCC BAA-1260 / CGDNIH1)</name>
    <dbReference type="NCBI Taxonomy" id="391165"/>
    <lineage>
        <taxon>Bacteria</taxon>
        <taxon>Pseudomonadati</taxon>
        <taxon>Pseudomonadota</taxon>
        <taxon>Alphaproteobacteria</taxon>
        <taxon>Acetobacterales</taxon>
        <taxon>Acetobacteraceae</taxon>
        <taxon>Granulibacter</taxon>
    </lineage>
</organism>
<reference key="1">
    <citation type="journal article" date="2007" name="J. Bacteriol.">
        <title>Genome sequence analysis of the emerging human pathogenic acetic acid bacterium Granulibacter bethesdensis.</title>
        <authorList>
            <person name="Greenberg D.E."/>
            <person name="Porcella S.F."/>
            <person name="Zelazny A.M."/>
            <person name="Virtaneva K."/>
            <person name="Sturdevant D.E."/>
            <person name="Kupko J.J. III"/>
            <person name="Barbian K.D."/>
            <person name="Babar A."/>
            <person name="Dorward D.W."/>
            <person name="Holland S.M."/>
        </authorList>
    </citation>
    <scope>NUCLEOTIDE SEQUENCE [LARGE SCALE GENOMIC DNA]</scope>
    <source>
        <strain>ATCC BAA-1260 / CGDNIH1</strain>
    </source>
</reference>
<name>Y2123_GRABC</name>
<sequence>MTMLKLALFFLVVSLIAGLFGFTGISAASAGIAKILFVIFLIVFVVLLVMALAAGKAIL</sequence>
<gene>
    <name type="ordered locus">GbCGDNIH1_2123</name>
</gene>
<keyword id="KW-1003">Cell membrane</keyword>
<keyword id="KW-0472">Membrane</keyword>
<keyword id="KW-1185">Reference proteome</keyword>
<keyword id="KW-0812">Transmembrane</keyword>
<keyword id="KW-1133">Transmembrane helix</keyword>
<accession>Q0BQ81</accession>
<proteinExistence type="inferred from homology"/>